<comment type="function">
    <text evidence="1">Protein S19 forms a complex with S13 that binds strongly to the 16S ribosomal RNA.</text>
</comment>
<comment type="similarity">
    <text evidence="1">Belongs to the universal ribosomal protein uS19 family.</text>
</comment>
<feature type="chain" id="PRO_1000060994" description="Small ribosomal subunit protein uS19">
    <location>
        <begin position="1"/>
        <end position="92"/>
    </location>
</feature>
<keyword id="KW-1185">Reference proteome</keyword>
<keyword id="KW-0687">Ribonucleoprotein</keyword>
<keyword id="KW-0689">Ribosomal protein</keyword>
<keyword id="KW-0694">RNA-binding</keyword>
<keyword id="KW-0699">rRNA-binding</keyword>
<sequence>MGRSLKKGPFADASLLKKVKEQEGSEKKTVIKTWSRRSTIFPSFIGYTFAVYDGRKHVPVYVQEDMVGHKLGEFVPTRTFHGHASDDKKTGK</sequence>
<reference key="1">
    <citation type="journal article" date="2011" name="PLoS Genet.">
        <title>The evolution of host specialization in the vertebrate gut symbiont Lactobacillus reuteri.</title>
        <authorList>
            <person name="Frese S.A."/>
            <person name="Benson A.K."/>
            <person name="Tannock G.W."/>
            <person name="Loach D.M."/>
            <person name="Kim J."/>
            <person name="Zhang M."/>
            <person name="Oh P.L."/>
            <person name="Heng N.C."/>
            <person name="Patil P.B."/>
            <person name="Juge N."/>
            <person name="Mackenzie D.A."/>
            <person name="Pearson B.M."/>
            <person name="Lapidus A."/>
            <person name="Dalin E."/>
            <person name="Tice H."/>
            <person name="Goltsman E."/>
            <person name="Land M."/>
            <person name="Hauser L."/>
            <person name="Ivanova N."/>
            <person name="Kyrpides N.C."/>
            <person name="Walter J."/>
        </authorList>
    </citation>
    <scope>NUCLEOTIDE SEQUENCE [LARGE SCALE GENOMIC DNA]</scope>
    <source>
        <strain>DSM 20016</strain>
    </source>
</reference>
<gene>
    <name evidence="1" type="primary">rpsS</name>
    <name type="ordered locus">Lreu_1479</name>
</gene>
<evidence type="ECO:0000255" key="1">
    <source>
        <dbReference type="HAMAP-Rule" id="MF_00531"/>
    </source>
</evidence>
<evidence type="ECO:0000305" key="2"/>
<dbReference type="EMBL" id="CP000705">
    <property type="protein sequence ID" value="ABQ83725.1"/>
    <property type="molecule type" value="Genomic_DNA"/>
</dbReference>
<dbReference type="RefSeq" id="WP_003664560.1">
    <property type="nucleotide sequence ID" value="NZ_AZDD01000010.1"/>
</dbReference>
<dbReference type="SMR" id="A5VLK1"/>
<dbReference type="STRING" id="557436.Lreu_1479"/>
<dbReference type="GeneID" id="77191475"/>
<dbReference type="KEGG" id="lre:Lreu_1479"/>
<dbReference type="PATRIC" id="fig|557436.17.peg.144"/>
<dbReference type="eggNOG" id="COG0185">
    <property type="taxonomic scope" value="Bacteria"/>
</dbReference>
<dbReference type="HOGENOM" id="CLU_144911_0_1_9"/>
<dbReference type="Proteomes" id="UP000001991">
    <property type="component" value="Chromosome"/>
</dbReference>
<dbReference type="GO" id="GO:0005737">
    <property type="term" value="C:cytoplasm"/>
    <property type="evidence" value="ECO:0007669"/>
    <property type="project" value="UniProtKB-ARBA"/>
</dbReference>
<dbReference type="GO" id="GO:0015935">
    <property type="term" value="C:small ribosomal subunit"/>
    <property type="evidence" value="ECO:0007669"/>
    <property type="project" value="InterPro"/>
</dbReference>
<dbReference type="GO" id="GO:0019843">
    <property type="term" value="F:rRNA binding"/>
    <property type="evidence" value="ECO:0007669"/>
    <property type="project" value="UniProtKB-UniRule"/>
</dbReference>
<dbReference type="GO" id="GO:0003735">
    <property type="term" value="F:structural constituent of ribosome"/>
    <property type="evidence" value="ECO:0007669"/>
    <property type="project" value="InterPro"/>
</dbReference>
<dbReference type="GO" id="GO:0000028">
    <property type="term" value="P:ribosomal small subunit assembly"/>
    <property type="evidence" value="ECO:0007669"/>
    <property type="project" value="TreeGrafter"/>
</dbReference>
<dbReference type="GO" id="GO:0006412">
    <property type="term" value="P:translation"/>
    <property type="evidence" value="ECO:0007669"/>
    <property type="project" value="UniProtKB-UniRule"/>
</dbReference>
<dbReference type="FunFam" id="3.30.860.10:FF:000001">
    <property type="entry name" value="30S ribosomal protein S19"/>
    <property type="match status" value="1"/>
</dbReference>
<dbReference type="Gene3D" id="3.30.860.10">
    <property type="entry name" value="30s Ribosomal Protein S19, Chain A"/>
    <property type="match status" value="1"/>
</dbReference>
<dbReference type="HAMAP" id="MF_00531">
    <property type="entry name" value="Ribosomal_uS19"/>
    <property type="match status" value="1"/>
</dbReference>
<dbReference type="InterPro" id="IPR002222">
    <property type="entry name" value="Ribosomal_uS19"/>
</dbReference>
<dbReference type="InterPro" id="IPR005732">
    <property type="entry name" value="Ribosomal_uS19_bac-type"/>
</dbReference>
<dbReference type="InterPro" id="IPR020934">
    <property type="entry name" value="Ribosomal_uS19_CS"/>
</dbReference>
<dbReference type="InterPro" id="IPR023575">
    <property type="entry name" value="Ribosomal_uS19_SF"/>
</dbReference>
<dbReference type="NCBIfam" id="TIGR01050">
    <property type="entry name" value="rpsS_bact"/>
    <property type="match status" value="1"/>
</dbReference>
<dbReference type="PANTHER" id="PTHR11880">
    <property type="entry name" value="RIBOSOMAL PROTEIN S19P FAMILY MEMBER"/>
    <property type="match status" value="1"/>
</dbReference>
<dbReference type="PANTHER" id="PTHR11880:SF8">
    <property type="entry name" value="SMALL RIBOSOMAL SUBUNIT PROTEIN US19M"/>
    <property type="match status" value="1"/>
</dbReference>
<dbReference type="Pfam" id="PF00203">
    <property type="entry name" value="Ribosomal_S19"/>
    <property type="match status" value="1"/>
</dbReference>
<dbReference type="PIRSF" id="PIRSF002144">
    <property type="entry name" value="Ribosomal_S19"/>
    <property type="match status" value="1"/>
</dbReference>
<dbReference type="PRINTS" id="PR00975">
    <property type="entry name" value="RIBOSOMALS19"/>
</dbReference>
<dbReference type="SUPFAM" id="SSF54570">
    <property type="entry name" value="Ribosomal protein S19"/>
    <property type="match status" value="1"/>
</dbReference>
<dbReference type="PROSITE" id="PS00323">
    <property type="entry name" value="RIBOSOMAL_S19"/>
    <property type="match status" value="1"/>
</dbReference>
<organism>
    <name type="scientific">Limosilactobacillus reuteri (strain DSM 20016)</name>
    <name type="common">Lactobacillus reuteri</name>
    <dbReference type="NCBI Taxonomy" id="557436"/>
    <lineage>
        <taxon>Bacteria</taxon>
        <taxon>Bacillati</taxon>
        <taxon>Bacillota</taxon>
        <taxon>Bacilli</taxon>
        <taxon>Lactobacillales</taxon>
        <taxon>Lactobacillaceae</taxon>
        <taxon>Limosilactobacillus</taxon>
    </lineage>
</organism>
<proteinExistence type="inferred from homology"/>
<name>RS19_LIMRD</name>
<protein>
    <recommendedName>
        <fullName evidence="1">Small ribosomal subunit protein uS19</fullName>
    </recommendedName>
    <alternativeName>
        <fullName evidence="2">30S ribosomal protein S19</fullName>
    </alternativeName>
</protein>
<accession>A5VLK1</accession>